<protein>
    <recommendedName>
        <fullName evidence="1">Aspartate carbamoyltransferase catalytic subunit</fullName>
        <ecNumber evidence="1">2.1.3.2</ecNumber>
    </recommendedName>
    <alternativeName>
        <fullName evidence="1">Aspartate transcarbamylase</fullName>
        <shortName evidence="1">ATCase</shortName>
    </alternativeName>
</protein>
<dbReference type="EC" id="2.1.3.2" evidence="1"/>
<dbReference type="EMBL" id="CP000653">
    <property type="protein sequence ID" value="ABP59135.1"/>
    <property type="molecule type" value="Genomic_DNA"/>
</dbReference>
<dbReference type="RefSeq" id="WP_012015860.1">
    <property type="nucleotide sequence ID" value="NC_009436.1"/>
</dbReference>
<dbReference type="SMR" id="A4W605"/>
<dbReference type="STRING" id="399742.Ent638_0447"/>
<dbReference type="KEGG" id="ent:Ent638_0447"/>
<dbReference type="eggNOG" id="COG0540">
    <property type="taxonomic scope" value="Bacteria"/>
</dbReference>
<dbReference type="HOGENOM" id="CLU_043846_1_2_6"/>
<dbReference type="OrthoDB" id="9774690at2"/>
<dbReference type="UniPathway" id="UPA00070">
    <property type="reaction ID" value="UER00116"/>
</dbReference>
<dbReference type="Proteomes" id="UP000000230">
    <property type="component" value="Chromosome"/>
</dbReference>
<dbReference type="GO" id="GO:0005829">
    <property type="term" value="C:cytosol"/>
    <property type="evidence" value="ECO:0007669"/>
    <property type="project" value="TreeGrafter"/>
</dbReference>
<dbReference type="GO" id="GO:0016597">
    <property type="term" value="F:amino acid binding"/>
    <property type="evidence" value="ECO:0007669"/>
    <property type="project" value="InterPro"/>
</dbReference>
<dbReference type="GO" id="GO:0004070">
    <property type="term" value="F:aspartate carbamoyltransferase activity"/>
    <property type="evidence" value="ECO:0007669"/>
    <property type="project" value="UniProtKB-UniRule"/>
</dbReference>
<dbReference type="GO" id="GO:0006207">
    <property type="term" value="P:'de novo' pyrimidine nucleobase biosynthetic process"/>
    <property type="evidence" value="ECO:0007669"/>
    <property type="project" value="InterPro"/>
</dbReference>
<dbReference type="GO" id="GO:0044205">
    <property type="term" value="P:'de novo' UMP biosynthetic process"/>
    <property type="evidence" value="ECO:0007669"/>
    <property type="project" value="UniProtKB-UniRule"/>
</dbReference>
<dbReference type="GO" id="GO:0006520">
    <property type="term" value="P:amino acid metabolic process"/>
    <property type="evidence" value="ECO:0007669"/>
    <property type="project" value="InterPro"/>
</dbReference>
<dbReference type="FunFam" id="3.40.50.1370:FF:000001">
    <property type="entry name" value="Aspartate carbamoyltransferase"/>
    <property type="match status" value="1"/>
</dbReference>
<dbReference type="FunFam" id="3.40.50.1370:FF:000002">
    <property type="entry name" value="Aspartate carbamoyltransferase 2"/>
    <property type="match status" value="1"/>
</dbReference>
<dbReference type="Gene3D" id="3.40.50.1370">
    <property type="entry name" value="Aspartate/ornithine carbamoyltransferase"/>
    <property type="match status" value="2"/>
</dbReference>
<dbReference type="HAMAP" id="MF_00001">
    <property type="entry name" value="Asp_carb_tr"/>
    <property type="match status" value="1"/>
</dbReference>
<dbReference type="InterPro" id="IPR006132">
    <property type="entry name" value="Asp/Orn_carbamoyltranf_P-bd"/>
</dbReference>
<dbReference type="InterPro" id="IPR006130">
    <property type="entry name" value="Asp/Orn_carbamoylTrfase"/>
</dbReference>
<dbReference type="InterPro" id="IPR036901">
    <property type="entry name" value="Asp/Orn_carbamoylTrfase_sf"/>
</dbReference>
<dbReference type="InterPro" id="IPR002082">
    <property type="entry name" value="Asp_carbamoyltransf"/>
</dbReference>
<dbReference type="InterPro" id="IPR006131">
    <property type="entry name" value="Asp_carbamoyltransf_Asp/Orn-bd"/>
</dbReference>
<dbReference type="NCBIfam" id="TIGR00670">
    <property type="entry name" value="asp_carb_tr"/>
    <property type="match status" value="1"/>
</dbReference>
<dbReference type="NCBIfam" id="NF002032">
    <property type="entry name" value="PRK00856.1"/>
    <property type="match status" value="1"/>
</dbReference>
<dbReference type="PANTHER" id="PTHR45753:SF6">
    <property type="entry name" value="ASPARTATE CARBAMOYLTRANSFERASE"/>
    <property type="match status" value="1"/>
</dbReference>
<dbReference type="PANTHER" id="PTHR45753">
    <property type="entry name" value="ORNITHINE CARBAMOYLTRANSFERASE, MITOCHONDRIAL"/>
    <property type="match status" value="1"/>
</dbReference>
<dbReference type="Pfam" id="PF00185">
    <property type="entry name" value="OTCace"/>
    <property type="match status" value="1"/>
</dbReference>
<dbReference type="Pfam" id="PF02729">
    <property type="entry name" value="OTCace_N"/>
    <property type="match status" value="1"/>
</dbReference>
<dbReference type="PRINTS" id="PR00100">
    <property type="entry name" value="AOTCASE"/>
</dbReference>
<dbReference type="PRINTS" id="PR00101">
    <property type="entry name" value="ATCASE"/>
</dbReference>
<dbReference type="SUPFAM" id="SSF53671">
    <property type="entry name" value="Aspartate/ornithine carbamoyltransferase"/>
    <property type="match status" value="1"/>
</dbReference>
<dbReference type="PROSITE" id="PS00097">
    <property type="entry name" value="CARBAMOYLTRANSFERASE"/>
    <property type="match status" value="1"/>
</dbReference>
<proteinExistence type="inferred from homology"/>
<feature type="chain" id="PRO_0000321100" description="Aspartate carbamoyltransferase catalytic subunit">
    <location>
        <begin position="1"/>
        <end position="310"/>
    </location>
</feature>
<feature type="binding site" evidence="1">
    <location>
        <position position="54"/>
    </location>
    <ligand>
        <name>carbamoyl phosphate</name>
        <dbReference type="ChEBI" id="CHEBI:58228"/>
    </ligand>
</feature>
<feature type="binding site" evidence="1">
    <location>
        <position position="55"/>
    </location>
    <ligand>
        <name>carbamoyl phosphate</name>
        <dbReference type="ChEBI" id="CHEBI:58228"/>
    </ligand>
</feature>
<feature type="binding site" evidence="1">
    <location>
        <position position="84"/>
    </location>
    <ligand>
        <name>L-aspartate</name>
        <dbReference type="ChEBI" id="CHEBI:29991"/>
    </ligand>
</feature>
<feature type="binding site" evidence="1">
    <location>
        <position position="105"/>
    </location>
    <ligand>
        <name>carbamoyl phosphate</name>
        <dbReference type="ChEBI" id="CHEBI:58228"/>
    </ligand>
</feature>
<feature type="binding site" evidence="1">
    <location>
        <position position="134"/>
    </location>
    <ligand>
        <name>carbamoyl phosphate</name>
        <dbReference type="ChEBI" id="CHEBI:58228"/>
    </ligand>
</feature>
<feature type="binding site" evidence="1">
    <location>
        <position position="137"/>
    </location>
    <ligand>
        <name>carbamoyl phosphate</name>
        <dbReference type="ChEBI" id="CHEBI:58228"/>
    </ligand>
</feature>
<feature type="binding site" evidence="1">
    <location>
        <position position="167"/>
    </location>
    <ligand>
        <name>L-aspartate</name>
        <dbReference type="ChEBI" id="CHEBI:29991"/>
    </ligand>
</feature>
<feature type="binding site" evidence="1">
    <location>
        <position position="229"/>
    </location>
    <ligand>
        <name>L-aspartate</name>
        <dbReference type="ChEBI" id="CHEBI:29991"/>
    </ligand>
</feature>
<feature type="binding site" evidence="1">
    <location>
        <position position="267"/>
    </location>
    <ligand>
        <name>carbamoyl phosphate</name>
        <dbReference type="ChEBI" id="CHEBI:58228"/>
    </ligand>
</feature>
<feature type="binding site" evidence="1">
    <location>
        <position position="268"/>
    </location>
    <ligand>
        <name>carbamoyl phosphate</name>
        <dbReference type="ChEBI" id="CHEBI:58228"/>
    </ligand>
</feature>
<name>PYRB_ENT38</name>
<organism>
    <name type="scientific">Enterobacter sp. (strain 638)</name>
    <dbReference type="NCBI Taxonomy" id="399742"/>
    <lineage>
        <taxon>Bacteria</taxon>
        <taxon>Pseudomonadati</taxon>
        <taxon>Pseudomonadota</taxon>
        <taxon>Gammaproteobacteria</taxon>
        <taxon>Enterobacterales</taxon>
        <taxon>Enterobacteriaceae</taxon>
        <taxon>Enterobacter</taxon>
    </lineage>
</organism>
<sequence length="310" mass="34354">MNPLYQKHIISINDLSREELELVLDTAAKLKANPQPELLKHKVIASCFFEASTRTRLSFETSMHRLGASVVGFSDSSNTSLGKKGETLADTISVISTYVDAIVMRHPQEGAARLATEFSGGIPILNAGDGANQHPTQTLLDLFTIQETQGQLENLNIAMVGDLKYGRTVHSLAQALAKFNGNRFYFIAPTALAMPQYILDMLDEKGITWSQHASIEEVMGEVDILYMTRVQKERLDPSEYANVKAQFVLRASDLEGARTNMKVLHPLPRIDEIATDVDKTPHAWYFQQAGNGIFARQALLALVLNRELAL</sequence>
<evidence type="ECO:0000255" key="1">
    <source>
        <dbReference type="HAMAP-Rule" id="MF_00001"/>
    </source>
</evidence>
<accession>A4W605</accession>
<reference key="1">
    <citation type="journal article" date="2010" name="PLoS Genet.">
        <title>Genome sequence of the plant growth promoting endophytic bacterium Enterobacter sp. 638.</title>
        <authorList>
            <person name="Taghavi S."/>
            <person name="van der Lelie D."/>
            <person name="Hoffman A."/>
            <person name="Zhang Y.B."/>
            <person name="Walla M.D."/>
            <person name="Vangronsveld J."/>
            <person name="Newman L."/>
            <person name="Monchy S."/>
        </authorList>
    </citation>
    <scope>NUCLEOTIDE SEQUENCE [LARGE SCALE GENOMIC DNA]</scope>
    <source>
        <strain>638</strain>
    </source>
</reference>
<keyword id="KW-0665">Pyrimidine biosynthesis</keyword>
<keyword id="KW-0808">Transferase</keyword>
<gene>
    <name evidence="1" type="primary">pyrB</name>
    <name type="ordered locus">Ent638_0447</name>
</gene>
<comment type="function">
    <text evidence="1">Catalyzes the condensation of carbamoyl phosphate and aspartate to form carbamoyl aspartate and inorganic phosphate, the committed step in the de novo pyrimidine nucleotide biosynthesis pathway.</text>
</comment>
<comment type="catalytic activity">
    <reaction evidence="1">
        <text>carbamoyl phosphate + L-aspartate = N-carbamoyl-L-aspartate + phosphate + H(+)</text>
        <dbReference type="Rhea" id="RHEA:20013"/>
        <dbReference type="ChEBI" id="CHEBI:15378"/>
        <dbReference type="ChEBI" id="CHEBI:29991"/>
        <dbReference type="ChEBI" id="CHEBI:32814"/>
        <dbReference type="ChEBI" id="CHEBI:43474"/>
        <dbReference type="ChEBI" id="CHEBI:58228"/>
        <dbReference type="EC" id="2.1.3.2"/>
    </reaction>
</comment>
<comment type="pathway">
    <text evidence="1">Pyrimidine metabolism; UMP biosynthesis via de novo pathway; (S)-dihydroorotate from bicarbonate: step 2/3.</text>
</comment>
<comment type="subunit">
    <text evidence="1">Heterododecamer (2C3:3R2) of six catalytic PyrB chains organized as two trimers (C3), and six regulatory PyrI chains organized as three dimers (R2).</text>
</comment>
<comment type="similarity">
    <text evidence="1">Belongs to the aspartate/ornithine carbamoyltransferase superfamily. ATCase family.</text>
</comment>